<gene>
    <name type="ORF">GSPATT00005691001</name>
</gene>
<accession>A0BV78</accession>
<comment type="function">
    <text evidence="1">Component of the cytosolic iron-sulfur (Fe-S) protein assembly (CIA) machinery. Required for the maturation of extramitochondrial Fe-S proteins. Part of an electron transfer chain functioning in an early step of cytosolic Fe-S biogenesis, facilitating the de novo assembly of a [4Fe-4S] cluster on the cytosolic Fe-S scaffold complex. Electrons are transferred from NADPH via a FAD- and FMN-containing diflavin oxidoreductase. Together with the diflavin oxidoreductase, also required for the assembly of the diferric tyrosyl radical cofactor of ribonucleotide reductase (RNR), probably by providing electrons for reduction during radical cofactor maturation in the catalytic small subunit.</text>
</comment>
<comment type="cofactor">
    <cofactor evidence="1">
        <name>[2Fe-2S] cluster</name>
        <dbReference type="ChEBI" id="CHEBI:190135"/>
    </cofactor>
</comment>
<comment type="cofactor">
    <cofactor evidence="1">
        <name>[4Fe-4S] cluster</name>
        <dbReference type="ChEBI" id="CHEBI:49883"/>
    </cofactor>
</comment>
<comment type="subunit">
    <text evidence="1">Monomer.</text>
</comment>
<comment type="subcellular location">
    <subcellularLocation>
        <location evidence="1">Cytoplasm</location>
    </subcellularLocation>
    <subcellularLocation>
        <location evidence="1">Mitochondrion intermembrane space</location>
    </subcellularLocation>
</comment>
<comment type="domain">
    <text evidence="1">The C-terminal domain binds 2 Fe-S clusters but is otherwise mostly in an intrinsically disordered conformation.</text>
</comment>
<comment type="domain">
    <text evidence="1">The N-terminal domain has structural similarity with S-adenosyl-L-methionine-dependent methyltransferases, but does not bind S-adenosyl-L-methionine. It is required for correct assembly of the 2 Fe-S clusters.</text>
</comment>
<comment type="domain">
    <text evidence="1">The twin Cx2C motifs are involved in the recognition by the mitochondrial MIA40-ERV1 disulfide relay system. The formation of 2 disulfide bonds in the Cx2C motifs through dithiol/disulfide exchange reactions effectively traps the protein in the mitochondrial intermembrane space.</text>
</comment>
<comment type="similarity">
    <text evidence="1">Belongs to the anamorsin family.</text>
</comment>
<protein>
    <recommendedName>
        <fullName evidence="1">Anamorsin homolog 1</fullName>
    </recommendedName>
    <alternativeName>
        <fullName evidence="1">Fe-S cluster assembly protein DRE2 homolog 1</fullName>
    </alternativeName>
</protein>
<evidence type="ECO:0000255" key="1">
    <source>
        <dbReference type="HAMAP-Rule" id="MF_03115"/>
    </source>
</evidence>
<organism>
    <name type="scientific">Paramecium tetraurelia</name>
    <dbReference type="NCBI Taxonomy" id="5888"/>
    <lineage>
        <taxon>Eukaryota</taxon>
        <taxon>Sar</taxon>
        <taxon>Alveolata</taxon>
        <taxon>Ciliophora</taxon>
        <taxon>Intramacronucleata</taxon>
        <taxon>Oligohymenophorea</taxon>
        <taxon>Peniculida</taxon>
        <taxon>Parameciidae</taxon>
        <taxon>Paramecium</taxon>
    </lineage>
</organism>
<feature type="chain" id="PRO_0000392353" description="Anamorsin homolog 1">
    <location>
        <begin position="1"/>
        <end position="250"/>
    </location>
</feature>
<feature type="region of interest" description="N-terminal SAM-like domain" evidence="1">
    <location>
        <begin position="1"/>
        <end position="104"/>
    </location>
</feature>
<feature type="region of interest" description="Linker" evidence="1">
    <location>
        <begin position="104"/>
        <end position="149"/>
    </location>
</feature>
<feature type="region of interest" description="Fe-S binding site A" evidence="1">
    <location>
        <begin position="155"/>
        <end position="167"/>
    </location>
</feature>
<feature type="region of interest" description="Fe-S binding site B" evidence="1">
    <location>
        <begin position="193"/>
        <end position="207"/>
    </location>
</feature>
<feature type="short sequence motif" description="Cx2C motif 1" evidence="1">
    <location>
        <begin position="193"/>
        <end position="196"/>
    </location>
</feature>
<feature type="short sequence motif" description="Cx2C motif 2" evidence="1">
    <location>
        <begin position="204"/>
        <end position="207"/>
    </location>
</feature>
<feature type="binding site" evidence="1">
    <location>
        <position position="155"/>
    </location>
    <ligand>
        <name>[2Fe-2S] cluster</name>
        <dbReference type="ChEBI" id="CHEBI:190135"/>
    </ligand>
</feature>
<feature type="binding site" evidence="1">
    <location>
        <position position="162"/>
    </location>
    <ligand>
        <name>[2Fe-2S] cluster</name>
        <dbReference type="ChEBI" id="CHEBI:190135"/>
    </ligand>
</feature>
<feature type="binding site" evidence="1">
    <location>
        <position position="165"/>
    </location>
    <ligand>
        <name>[2Fe-2S] cluster</name>
        <dbReference type="ChEBI" id="CHEBI:190135"/>
    </ligand>
</feature>
<feature type="binding site" evidence="1">
    <location>
        <position position="167"/>
    </location>
    <ligand>
        <name>[2Fe-2S] cluster</name>
        <dbReference type="ChEBI" id="CHEBI:190135"/>
    </ligand>
</feature>
<feature type="binding site" evidence="1">
    <location>
        <position position="193"/>
    </location>
    <ligand>
        <name>[4Fe-4S] cluster</name>
        <dbReference type="ChEBI" id="CHEBI:49883"/>
    </ligand>
</feature>
<feature type="binding site" evidence="1">
    <location>
        <position position="196"/>
    </location>
    <ligand>
        <name>[4Fe-4S] cluster</name>
        <dbReference type="ChEBI" id="CHEBI:49883"/>
    </ligand>
</feature>
<feature type="binding site" evidence="1">
    <location>
        <position position="204"/>
    </location>
    <ligand>
        <name>[4Fe-4S] cluster</name>
        <dbReference type="ChEBI" id="CHEBI:49883"/>
    </ligand>
</feature>
<feature type="binding site" evidence="1">
    <location>
        <position position="207"/>
    </location>
    <ligand>
        <name>[4Fe-4S] cluster</name>
        <dbReference type="ChEBI" id="CHEBI:49883"/>
    </ligand>
</feature>
<proteinExistence type="inferred from homology"/>
<name>DRE21_PARTE</name>
<keyword id="KW-0001">2Fe-2S</keyword>
<keyword id="KW-0004">4Fe-4S</keyword>
<keyword id="KW-0963">Cytoplasm</keyword>
<keyword id="KW-0408">Iron</keyword>
<keyword id="KW-0411">Iron-sulfur</keyword>
<keyword id="KW-0479">Metal-binding</keyword>
<keyword id="KW-0496">Mitochondrion</keyword>
<keyword id="KW-1185">Reference proteome</keyword>
<sequence length="250" mass="28631">MNLKITINQQASISDSLIIANLNLIQFFRDNTFNKIECDQLLTLKDAVQISQILKDQGVLIYEGEINESVITYFQASGLYNQGQGKFIKQVLQIKKLNIPQQEFNNCYGKYDYIEQKFQNQINFFKQVDINGKQEIIDENELLDDGVQVKQVESCASKPRACANCTCGRKEMEEKQDKEQLLEQLKNNSIKGCGSCYLGDAFRCANCPYRGLPAFKDGEQVKVLQDDVFLQEQEEKDQVKLENGKVKLKI</sequence>
<reference key="1">
    <citation type="journal article" date="2006" name="Nature">
        <title>Global trends of whole-genome duplications revealed by the ciliate Paramecium tetraurelia.</title>
        <authorList>
            <person name="Aury J.-M."/>
            <person name="Jaillon O."/>
            <person name="Duret L."/>
            <person name="Noel B."/>
            <person name="Jubin C."/>
            <person name="Porcel B.M."/>
            <person name="Segurens B."/>
            <person name="Daubin V."/>
            <person name="Anthouard V."/>
            <person name="Aiach N."/>
            <person name="Arnaiz O."/>
            <person name="Billaut A."/>
            <person name="Beisson J."/>
            <person name="Blanc I."/>
            <person name="Bouhouche K."/>
            <person name="Camara F."/>
            <person name="Duharcourt S."/>
            <person name="Guigo R."/>
            <person name="Gogendeau D."/>
            <person name="Katinka M."/>
            <person name="Keller A.-M."/>
            <person name="Kissmehl R."/>
            <person name="Klotz C."/>
            <person name="Koll F."/>
            <person name="Le Mouel A."/>
            <person name="Lepere G."/>
            <person name="Malinsky S."/>
            <person name="Nowacki M."/>
            <person name="Nowak J.K."/>
            <person name="Plattner H."/>
            <person name="Poulain J."/>
            <person name="Ruiz F."/>
            <person name="Serrano V."/>
            <person name="Zagulski M."/>
            <person name="Dessen P."/>
            <person name="Betermier M."/>
            <person name="Weissenbach J."/>
            <person name="Scarpelli C."/>
            <person name="Schaechter V."/>
            <person name="Sperling L."/>
            <person name="Meyer E."/>
            <person name="Cohen J."/>
            <person name="Wincker P."/>
        </authorList>
    </citation>
    <scope>NUCLEOTIDE SEQUENCE [LARGE SCALE GENOMIC DNA]</scope>
    <source>
        <strain>Stock d4-2</strain>
    </source>
</reference>
<dbReference type="EMBL" id="CT868019">
    <property type="protein sequence ID" value="CAK62445.1"/>
    <property type="molecule type" value="Genomic_DNA"/>
</dbReference>
<dbReference type="RefSeq" id="XP_001429843.1">
    <property type="nucleotide sequence ID" value="XM_001429806.2"/>
</dbReference>
<dbReference type="SMR" id="A0BV78"/>
<dbReference type="STRING" id="5888.A0BV78"/>
<dbReference type="EnsemblProtists" id="CAK62445">
    <property type="protein sequence ID" value="CAK62445"/>
    <property type="gene ID" value="GSPATT00005691001"/>
</dbReference>
<dbReference type="GeneID" id="5015627"/>
<dbReference type="KEGG" id="ptm:GSPATT00005691001"/>
<dbReference type="eggNOG" id="KOG4020">
    <property type="taxonomic scope" value="Eukaryota"/>
</dbReference>
<dbReference type="HOGENOM" id="CLU_929001_0_0_1"/>
<dbReference type="InParanoid" id="A0BV78"/>
<dbReference type="OMA" id="PQQEFNN"/>
<dbReference type="OrthoDB" id="311633at2759"/>
<dbReference type="Proteomes" id="UP000000600">
    <property type="component" value="Partially assembled WGS sequence"/>
</dbReference>
<dbReference type="GO" id="GO:0005737">
    <property type="term" value="C:cytoplasm"/>
    <property type="evidence" value="ECO:0000318"/>
    <property type="project" value="GO_Central"/>
</dbReference>
<dbReference type="GO" id="GO:0005758">
    <property type="term" value="C:mitochondrial intermembrane space"/>
    <property type="evidence" value="ECO:0007669"/>
    <property type="project" value="UniProtKB-SubCell"/>
</dbReference>
<dbReference type="GO" id="GO:0051537">
    <property type="term" value="F:2 iron, 2 sulfur cluster binding"/>
    <property type="evidence" value="ECO:0007669"/>
    <property type="project" value="UniProtKB-UniRule"/>
</dbReference>
<dbReference type="GO" id="GO:0051539">
    <property type="term" value="F:4 iron, 4 sulfur cluster binding"/>
    <property type="evidence" value="ECO:0007669"/>
    <property type="project" value="UniProtKB-KW"/>
</dbReference>
<dbReference type="GO" id="GO:0009055">
    <property type="term" value="F:electron transfer activity"/>
    <property type="evidence" value="ECO:0007669"/>
    <property type="project" value="UniProtKB-UniRule"/>
</dbReference>
<dbReference type="GO" id="GO:0046872">
    <property type="term" value="F:metal ion binding"/>
    <property type="evidence" value="ECO:0007669"/>
    <property type="project" value="UniProtKB-KW"/>
</dbReference>
<dbReference type="GO" id="GO:0016226">
    <property type="term" value="P:iron-sulfur cluster assembly"/>
    <property type="evidence" value="ECO:0000318"/>
    <property type="project" value="GO_Central"/>
</dbReference>
<dbReference type="HAMAP" id="MF_03115">
    <property type="entry name" value="Anamorsin"/>
    <property type="match status" value="1"/>
</dbReference>
<dbReference type="InterPro" id="IPR007785">
    <property type="entry name" value="Anamorsin"/>
</dbReference>
<dbReference type="InterPro" id="IPR046408">
    <property type="entry name" value="CIAPIN1"/>
</dbReference>
<dbReference type="PANTHER" id="PTHR13273">
    <property type="entry name" value="ANAMORSIN"/>
    <property type="match status" value="1"/>
</dbReference>
<dbReference type="PANTHER" id="PTHR13273:SF14">
    <property type="entry name" value="ANAMORSIN"/>
    <property type="match status" value="1"/>
</dbReference>
<dbReference type="Pfam" id="PF05093">
    <property type="entry name" value="CIAPIN1"/>
    <property type="match status" value="1"/>
</dbReference>